<protein>
    <recommendedName>
        <fullName evidence="1">Light-independent protochlorophyllide reductase iron-sulfur ATP-binding protein</fullName>
        <shortName evidence="1">DPOR subunit L</shortName>
        <shortName evidence="1">LI-POR subunit L</shortName>
        <ecNumber evidence="1">1.3.7.7</ecNumber>
    </recommendedName>
</protein>
<keyword id="KW-0004">4Fe-4S</keyword>
<keyword id="KW-0067">ATP-binding</keyword>
<keyword id="KW-0149">Chlorophyll biosynthesis</keyword>
<keyword id="KW-0150">Chloroplast</keyword>
<keyword id="KW-0408">Iron</keyword>
<keyword id="KW-0411">Iron-sulfur</keyword>
<keyword id="KW-0460">Magnesium</keyword>
<keyword id="KW-0479">Metal-binding</keyword>
<keyword id="KW-0547">Nucleotide-binding</keyword>
<keyword id="KW-0560">Oxidoreductase</keyword>
<keyword id="KW-0602">Photosynthesis</keyword>
<keyword id="KW-0934">Plastid</keyword>
<organism>
    <name type="scientific">Nephroselmis olivacea</name>
    <name type="common">Green alga</name>
    <dbReference type="NCBI Taxonomy" id="31312"/>
    <lineage>
        <taxon>Eukaryota</taxon>
        <taxon>Viridiplantae</taxon>
        <taxon>Chlorophyta</taxon>
        <taxon>Nephroselmidophyceae</taxon>
        <taxon>Nephroselmidales</taxon>
        <taxon>Nephroselmidaceae</taxon>
        <taxon>Nephroselmis</taxon>
    </lineage>
</organism>
<proteinExistence type="inferred from homology"/>
<reference key="1">
    <citation type="journal article" date="1999" name="Proc. Natl. Acad. Sci. U.S.A.">
        <title>The complete chloroplast DNA sequence of the green alga Nephroselmis olivacea: insights into the architecture of ancestral chloroplast genomes.</title>
        <authorList>
            <person name="Turmel M."/>
            <person name="Otis C."/>
            <person name="Lemieux C."/>
        </authorList>
    </citation>
    <scope>NUCLEOTIDE SEQUENCE [LARGE SCALE GENOMIC DNA]</scope>
    <source>
        <strain>NIES-484 / S-N-5-8</strain>
    </source>
</reference>
<dbReference type="EC" id="1.3.7.7" evidence="1"/>
<dbReference type="EMBL" id="AF137379">
    <property type="protein sequence ID" value="AAD54883.1"/>
    <property type="molecule type" value="Genomic_DNA"/>
</dbReference>
<dbReference type="EMBL" id="AF137379">
    <property type="protein sequence ID" value="AAD54906.1"/>
    <property type="molecule type" value="Genomic_DNA"/>
</dbReference>
<dbReference type="SMR" id="Q9T399"/>
<dbReference type="UniPathway" id="UPA00670"/>
<dbReference type="GO" id="GO:0009507">
    <property type="term" value="C:chloroplast"/>
    <property type="evidence" value="ECO:0007669"/>
    <property type="project" value="UniProtKB-SubCell"/>
</dbReference>
<dbReference type="GO" id="GO:0051539">
    <property type="term" value="F:4 iron, 4 sulfur cluster binding"/>
    <property type="evidence" value="ECO:0007669"/>
    <property type="project" value="UniProtKB-UniRule"/>
</dbReference>
<dbReference type="GO" id="GO:0005524">
    <property type="term" value="F:ATP binding"/>
    <property type="evidence" value="ECO:0007669"/>
    <property type="project" value="UniProtKB-UniRule"/>
</dbReference>
<dbReference type="GO" id="GO:0046872">
    <property type="term" value="F:metal ion binding"/>
    <property type="evidence" value="ECO:0007669"/>
    <property type="project" value="UniProtKB-KW"/>
</dbReference>
<dbReference type="GO" id="GO:0016730">
    <property type="term" value="F:oxidoreductase activity, acting on iron-sulfur proteins as donors"/>
    <property type="evidence" value="ECO:0007669"/>
    <property type="project" value="InterPro"/>
</dbReference>
<dbReference type="GO" id="GO:0016636">
    <property type="term" value="F:oxidoreductase activity, acting on the CH-CH group of donors, iron-sulfur protein as acceptor"/>
    <property type="evidence" value="ECO:0007669"/>
    <property type="project" value="UniProtKB-UniRule"/>
</dbReference>
<dbReference type="GO" id="GO:0036068">
    <property type="term" value="P:light-independent chlorophyll biosynthetic process"/>
    <property type="evidence" value="ECO:0007669"/>
    <property type="project" value="UniProtKB-UniRule"/>
</dbReference>
<dbReference type="GO" id="GO:0019685">
    <property type="term" value="P:photosynthesis, dark reaction"/>
    <property type="evidence" value="ECO:0007669"/>
    <property type="project" value="InterPro"/>
</dbReference>
<dbReference type="CDD" id="cd02032">
    <property type="entry name" value="Bchl-like"/>
    <property type="match status" value="1"/>
</dbReference>
<dbReference type="Gene3D" id="3.40.50.300">
    <property type="entry name" value="P-loop containing nucleotide triphosphate hydrolases"/>
    <property type="match status" value="1"/>
</dbReference>
<dbReference type="HAMAP" id="MF_00355">
    <property type="entry name" value="ChlL_BchL"/>
    <property type="match status" value="1"/>
</dbReference>
<dbReference type="InterPro" id="IPR030655">
    <property type="entry name" value="NifH/chlL_CS"/>
</dbReference>
<dbReference type="InterPro" id="IPR000392">
    <property type="entry name" value="NifH/frxC"/>
</dbReference>
<dbReference type="InterPro" id="IPR027417">
    <property type="entry name" value="P-loop_NTPase"/>
</dbReference>
<dbReference type="InterPro" id="IPR005971">
    <property type="entry name" value="Protochlorophyllide_ATP-bd"/>
</dbReference>
<dbReference type="NCBIfam" id="TIGR01281">
    <property type="entry name" value="DPOR_bchL"/>
    <property type="match status" value="1"/>
</dbReference>
<dbReference type="PANTHER" id="PTHR42864">
    <property type="entry name" value="LIGHT-INDEPENDENT PROTOCHLOROPHYLLIDE REDUCTASE IRON-SULFUR ATP-BINDING PROTEIN"/>
    <property type="match status" value="1"/>
</dbReference>
<dbReference type="PANTHER" id="PTHR42864:SF2">
    <property type="entry name" value="LIGHT-INDEPENDENT PROTOCHLOROPHYLLIDE REDUCTASE IRON-SULFUR ATP-BINDING PROTEIN"/>
    <property type="match status" value="1"/>
</dbReference>
<dbReference type="Pfam" id="PF00142">
    <property type="entry name" value="Fer4_NifH"/>
    <property type="match status" value="1"/>
</dbReference>
<dbReference type="PIRSF" id="PIRSF000363">
    <property type="entry name" value="Nitrogenase_iron"/>
    <property type="match status" value="1"/>
</dbReference>
<dbReference type="PRINTS" id="PR00091">
    <property type="entry name" value="NITROGNASEII"/>
</dbReference>
<dbReference type="SUPFAM" id="SSF52540">
    <property type="entry name" value="P-loop containing nucleoside triphosphate hydrolases"/>
    <property type="match status" value="1"/>
</dbReference>
<dbReference type="PROSITE" id="PS00746">
    <property type="entry name" value="NIFH_FRXC_1"/>
    <property type="match status" value="1"/>
</dbReference>
<dbReference type="PROSITE" id="PS00692">
    <property type="entry name" value="NIFH_FRXC_2"/>
    <property type="match status" value="1"/>
</dbReference>
<dbReference type="PROSITE" id="PS51026">
    <property type="entry name" value="NIFH_FRXC_3"/>
    <property type="match status" value="1"/>
</dbReference>
<gene>
    <name evidence="1" type="primary">chlL-A</name>
</gene>
<gene>
    <name evidence="1" type="primary">chlL-B</name>
</gene>
<accession>Q9T399</accession>
<sequence length="287" mass="31418">MKLAVYGKGGIGKSTSSCNISIALATRGKKVLQIGADPKHDSTFALTGFLIPTIMDTLQSKDYHYEEIWPEDIIYQGYGGVDCVEAGGPPAGAGCGGFVVGETTKLLKELNSFYEYDVILFDVLGDVVCGGFPAPLNYADYCLIVTDNGFDALFAANRIAASVREKARTHPLRLAGLVGNRTSKRDLIDKYVESCPMPVLEVLPLIEEIRVSRVKGKTLFEMTETDSSLNYVCQYYLNIADQLLAEPEGVVPKEVADRELFSLLSDFYHREASFTPQEGVVDSFLLV</sequence>
<geneLocation type="chloroplast"/>
<comment type="function">
    <text evidence="1">Component of the dark-operative protochlorophyllide reductase (DPOR) that uses Mg-ATP and reduced ferredoxin to reduce ring D of protochlorophyllide (Pchlide) to form chlorophyllide a (Chlide). This reaction is light-independent. The L component serves as a unique electron donor to the NB-component of the complex, and binds Mg-ATP.</text>
</comment>
<comment type="catalytic activity">
    <reaction evidence="1">
        <text>chlorophyllide a + oxidized 2[4Fe-4S]-[ferredoxin] + 2 ADP + 2 phosphate = protochlorophyllide a + reduced 2[4Fe-4S]-[ferredoxin] + 2 ATP + 2 H2O</text>
        <dbReference type="Rhea" id="RHEA:28202"/>
        <dbReference type="Rhea" id="RHEA-COMP:10002"/>
        <dbReference type="Rhea" id="RHEA-COMP:10004"/>
        <dbReference type="ChEBI" id="CHEBI:15377"/>
        <dbReference type="ChEBI" id="CHEBI:30616"/>
        <dbReference type="ChEBI" id="CHEBI:33722"/>
        <dbReference type="ChEBI" id="CHEBI:33723"/>
        <dbReference type="ChEBI" id="CHEBI:43474"/>
        <dbReference type="ChEBI" id="CHEBI:83348"/>
        <dbReference type="ChEBI" id="CHEBI:83350"/>
        <dbReference type="ChEBI" id="CHEBI:456216"/>
        <dbReference type="EC" id="1.3.7.7"/>
    </reaction>
</comment>
<comment type="cofactor">
    <cofactor evidence="1">
        <name>[4Fe-4S] cluster</name>
        <dbReference type="ChEBI" id="CHEBI:49883"/>
    </cofactor>
    <text evidence="1">Binds 1 [4Fe-4S] cluster per dimer.</text>
</comment>
<comment type="pathway">
    <text evidence="1">Porphyrin-containing compound metabolism; chlorophyll biosynthesis (light-independent).</text>
</comment>
<comment type="subunit">
    <text evidence="1">Homodimer. Protochlorophyllide reductase is composed of three subunits; ChlL, ChlN and ChlB.</text>
</comment>
<comment type="subcellular location">
    <subcellularLocation>
        <location>Plastid</location>
        <location>Chloroplast</location>
    </subcellularLocation>
</comment>
<comment type="similarity">
    <text evidence="1">Belongs to the NifH/BchL/ChlL family.</text>
</comment>
<feature type="chain" id="PRO_0000139561" description="Light-independent protochlorophyllide reductase iron-sulfur ATP-binding protein">
    <location>
        <begin position="1"/>
        <end position="287"/>
    </location>
</feature>
<feature type="binding site" evidence="1">
    <location>
        <begin position="10"/>
        <end position="15"/>
    </location>
    <ligand>
        <name>ATP</name>
        <dbReference type="ChEBI" id="CHEBI:30616"/>
    </ligand>
</feature>
<feature type="binding site" evidence="1">
    <location>
        <position position="14"/>
    </location>
    <ligand>
        <name>Mg(2+)</name>
        <dbReference type="ChEBI" id="CHEBI:18420"/>
    </ligand>
</feature>
<feature type="binding site" evidence="1">
    <location>
        <position position="39"/>
    </location>
    <ligand>
        <name>ATP</name>
        <dbReference type="ChEBI" id="CHEBI:30616"/>
    </ligand>
</feature>
<feature type="binding site" evidence="1">
    <location>
        <position position="95"/>
    </location>
    <ligand>
        <name>[4Fe-4S] cluster</name>
        <dbReference type="ChEBI" id="CHEBI:49883"/>
        <note>ligand shared between dimeric partners</note>
    </ligand>
</feature>
<feature type="binding site" evidence="1">
    <location>
        <position position="129"/>
    </location>
    <ligand>
        <name>[4Fe-4S] cluster</name>
        <dbReference type="ChEBI" id="CHEBI:49883"/>
        <note>ligand shared between dimeric partners</note>
    </ligand>
</feature>
<feature type="binding site" evidence="1">
    <location>
        <begin position="180"/>
        <end position="181"/>
    </location>
    <ligand>
        <name>ATP</name>
        <dbReference type="ChEBI" id="CHEBI:30616"/>
    </ligand>
</feature>
<name>CHLL_NEPOL</name>
<evidence type="ECO:0000255" key="1">
    <source>
        <dbReference type="HAMAP-Rule" id="MF_00355"/>
    </source>
</evidence>